<gene>
    <name type="primary">MT-CYB</name>
    <name type="synonym">COB</name>
    <name type="synonym">CYTB</name>
    <name type="synonym">MTCYB</name>
</gene>
<comment type="function">
    <text evidence="2">Component of the ubiquinol-cytochrome c reductase complex (complex III or cytochrome b-c1 complex) that is part of the mitochondrial respiratory chain. The b-c1 complex mediates electron transfer from ubiquinol to cytochrome c. Contributes to the generation of a proton gradient across the mitochondrial membrane that is then used for ATP synthesis.</text>
</comment>
<comment type="cofactor">
    <cofactor evidence="2">
        <name>heme b</name>
        <dbReference type="ChEBI" id="CHEBI:60344"/>
    </cofactor>
    <text evidence="2">Binds 2 heme b groups non-covalently.</text>
</comment>
<comment type="subunit">
    <text evidence="2">The cytochrome bc1 complex contains 11 subunits: 3 respiratory subunits (MT-CYB, CYC1 and UQCRFS1), 2 core proteins (UQCRC1 and UQCRC2) and 6 low-molecular weight proteins (UQCRH/QCR6, UQCRB/QCR7, UQCRQ/QCR8, UQCR10/QCR9, UQCR11/QCR10 and a cleavage product of UQCRFS1). This cytochrome bc1 complex then forms a dimer.</text>
</comment>
<comment type="subcellular location">
    <subcellularLocation>
        <location evidence="2">Mitochondrion inner membrane</location>
        <topology evidence="2">Multi-pass membrane protein</topology>
    </subcellularLocation>
</comment>
<comment type="miscellaneous">
    <text evidence="1">Heme 1 (or BL or b562) is low-potential and absorbs at about 562 nm, and heme 2 (or BH or b566) is high-potential and absorbs at about 566 nm.</text>
</comment>
<comment type="similarity">
    <text evidence="3 4">Belongs to the cytochrome b family.</text>
</comment>
<comment type="caution">
    <text evidence="2">The full-length protein contains only eight transmembrane helices, not nine as predicted by bioinformatics tools.</text>
</comment>
<keyword id="KW-0249">Electron transport</keyword>
<keyword id="KW-0349">Heme</keyword>
<keyword id="KW-0408">Iron</keyword>
<keyword id="KW-0472">Membrane</keyword>
<keyword id="KW-0479">Metal-binding</keyword>
<keyword id="KW-0496">Mitochondrion</keyword>
<keyword id="KW-0999">Mitochondrion inner membrane</keyword>
<keyword id="KW-0679">Respiratory chain</keyword>
<keyword id="KW-0812">Transmembrane</keyword>
<keyword id="KW-1133">Transmembrane helix</keyword>
<keyword id="KW-0813">Transport</keyword>
<keyword id="KW-0830">Ubiquinone</keyword>
<feature type="chain" id="PRO_0000254827" description="Cytochrome b">
    <location>
        <begin position="1"/>
        <end position="379"/>
    </location>
</feature>
<feature type="transmembrane region" description="Helical" evidence="2">
    <location>
        <begin position="33"/>
        <end position="53"/>
    </location>
</feature>
<feature type="transmembrane region" description="Helical" evidence="2">
    <location>
        <begin position="77"/>
        <end position="98"/>
    </location>
</feature>
<feature type="transmembrane region" description="Helical" evidence="2">
    <location>
        <begin position="113"/>
        <end position="133"/>
    </location>
</feature>
<feature type="transmembrane region" description="Helical" evidence="2">
    <location>
        <begin position="178"/>
        <end position="198"/>
    </location>
</feature>
<feature type="transmembrane region" description="Helical" evidence="2">
    <location>
        <begin position="226"/>
        <end position="246"/>
    </location>
</feature>
<feature type="transmembrane region" description="Helical" evidence="2">
    <location>
        <begin position="288"/>
        <end position="308"/>
    </location>
</feature>
<feature type="transmembrane region" description="Helical" evidence="2">
    <location>
        <begin position="320"/>
        <end position="340"/>
    </location>
</feature>
<feature type="transmembrane region" description="Helical" evidence="2">
    <location>
        <begin position="347"/>
        <end position="367"/>
    </location>
</feature>
<feature type="binding site" description="axial binding residue" evidence="2">
    <location>
        <position position="83"/>
    </location>
    <ligand>
        <name>heme b</name>
        <dbReference type="ChEBI" id="CHEBI:60344"/>
        <label>b562</label>
    </ligand>
    <ligandPart>
        <name>Fe</name>
        <dbReference type="ChEBI" id="CHEBI:18248"/>
    </ligandPart>
</feature>
<feature type="binding site" description="axial binding residue" evidence="2">
    <location>
        <position position="97"/>
    </location>
    <ligand>
        <name>heme b</name>
        <dbReference type="ChEBI" id="CHEBI:60344"/>
        <label>b566</label>
    </ligand>
    <ligandPart>
        <name>Fe</name>
        <dbReference type="ChEBI" id="CHEBI:18248"/>
    </ligandPart>
</feature>
<feature type="binding site" description="axial binding residue" evidence="2">
    <location>
        <position position="182"/>
    </location>
    <ligand>
        <name>heme b</name>
        <dbReference type="ChEBI" id="CHEBI:60344"/>
        <label>b562</label>
    </ligand>
    <ligandPart>
        <name>Fe</name>
        <dbReference type="ChEBI" id="CHEBI:18248"/>
    </ligandPart>
</feature>
<feature type="binding site" description="axial binding residue" evidence="2">
    <location>
        <position position="196"/>
    </location>
    <ligand>
        <name>heme b</name>
        <dbReference type="ChEBI" id="CHEBI:60344"/>
        <label>b566</label>
    </ligand>
    <ligandPart>
        <name>Fe</name>
        <dbReference type="ChEBI" id="CHEBI:18248"/>
    </ligandPart>
</feature>
<feature type="binding site" evidence="2">
    <location>
        <position position="201"/>
    </location>
    <ligand>
        <name>a ubiquinone</name>
        <dbReference type="ChEBI" id="CHEBI:16389"/>
    </ligand>
</feature>
<geneLocation type="mitochondrion"/>
<dbReference type="EMBL" id="AF026887">
    <property type="protein sequence ID" value="AAB94609.1"/>
    <property type="molecule type" value="Genomic_DNA"/>
</dbReference>
<dbReference type="SMR" id="Q7J6I1"/>
<dbReference type="GO" id="GO:0005743">
    <property type="term" value="C:mitochondrial inner membrane"/>
    <property type="evidence" value="ECO:0007669"/>
    <property type="project" value="UniProtKB-SubCell"/>
</dbReference>
<dbReference type="GO" id="GO:0045275">
    <property type="term" value="C:respiratory chain complex III"/>
    <property type="evidence" value="ECO:0007669"/>
    <property type="project" value="InterPro"/>
</dbReference>
<dbReference type="GO" id="GO:0046872">
    <property type="term" value="F:metal ion binding"/>
    <property type="evidence" value="ECO:0007669"/>
    <property type="project" value="UniProtKB-KW"/>
</dbReference>
<dbReference type="GO" id="GO:0008121">
    <property type="term" value="F:ubiquinol-cytochrome-c reductase activity"/>
    <property type="evidence" value="ECO:0007669"/>
    <property type="project" value="InterPro"/>
</dbReference>
<dbReference type="GO" id="GO:0006122">
    <property type="term" value="P:mitochondrial electron transport, ubiquinol to cytochrome c"/>
    <property type="evidence" value="ECO:0007669"/>
    <property type="project" value="TreeGrafter"/>
</dbReference>
<dbReference type="CDD" id="cd00290">
    <property type="entry name" value="cytochrome_b_C"/>
    <property type="match status" value="1"/>
</dbReference>
<dbReference type="CDD" id="cd00284">
    <property type="entry name" value="Cytochrome_b_N"/>
    <property type="match status" value="1"/>
</dbReference>
<dbReference type="FunFam" id="1.20.810.10:FF:000002">
    <property type="entry name" value="Cytochrome b"/>
    <property type="match status" value="1"/>
</dbReference>
<dbReference type="Gene3D" id="1.20.810.10">
    <property type="entry name" value="Cytochrome Bc1 Complex, Chain C"/>
    <property type="match status" value="1"/>
</dbReference>
<dbReference type="InterPro" id="IPR005798">
    <property type="entry name" value="Cyt_b/b6_C"/>
</dbReference>
<dbReference type="InterPro" id="IPR036150">
    <property type="entry name" value="Cyt_b/b6_C_sf"/>
</dbReference>
<dbReference type="InterPro" id="IPR005797">
    <property type="entry name" value="Cyt_b/b6_N"/>
</dbReference>
<dbReference type="InterPro" id="IPR027387">
    <property type="entry name" value="Cytb/b6-like_sf"/>
</dbReference>
<dbReference type="InterPro" id="IPR030689">
    <property type="entry name" value="Cytochrome_b"/>
</dbReference>
<dbReference type="InterPro" id="IPR048260">
    <property type="entry name" value="Cytochrome_b_C_euk/bac"/>
</dbReference>
<dbReference type="InterPro" id="IPR048259">
    <property type="entry name" value="Cytochrome_b_N_euk/bac"/>
</dbReference>
<dbReference type="InterPro" id="IPR016174">
    <property type="entry name" value="Di-haem_cyt_TM"/>
</dbReference>
<dbReference type="PANTHER" id="PTHR19271">
    <property type="entry name" value="CYTOCHROME B"/>
    <property type="match status" value="1"/>
</dbReference>
<dbReference type="PANTHER" id="PTHR19271:SF16">
    <property type="entry name" value="CYTOCHROME B"/>
    <property type="match status" value="1"/>
</dbReference>
<dbReference type="Pfam" id="PF00032">
    <property type="entry name" value="Cytochrom_B_C"/>
    <property type="match status" value="1"/>
</dbReference>
<dbReference type="Pfam" id="PF00033">
    <property type="entry name" value="Cytochrome_B"/>
    <property type="match status" value="1"/>
</dbReference>
<dbReference type="PIRSF" id="PIRSF038885">
    <property type="entry name" value="COB"/>
    <property type="match status" value="1"/>
</dbReference>
<dbReference type="SUPFAM" id="SSF81648">
    <property type="entry name" value="a domain/subunit of cytochrome bc1 complex (Ubiquinol-cytochrome c reductase)"/>
    <property type="match status" value="1"/>
</dbReference>
<dbReference type="SUPFAM" id="SSF81342">
    <property type="entry name" value="Transmembrane di-heme cytochromes"/>
    <property type="match status" value="1"/>
</dbReference>
<dbReference type="PROSITE" id="PS51003">
    <property type="entry name" value="CYTB_CTER"/>
    <property type="match status" value="1"/>
</dbReference>
<dbReference type="PROSITE" id="PS51002">
    <property type="entry name" value="CYTB_NTER"/>
    <property type="match status" value="1"/>
</dbReference>
<protein>
    <recommendedName>
        <fullName>Cytochrome b</fullName>
    </recommendedName>
    <alternativeName>
        <fullName>Complex III subunit 3</fullName>
    </alternativeName>
    <alternativeName>
        <fullName>Complex III subunit III</fullName>
    </alternativeName>
    <alternativeName>
        <fullName>Cytochrome b-c1 complex subunit 3</fullName>
    </alternativeName>
    <alternativeName>
        <fullName>Ubiquinol-cytochrome-c reductase complex cytochrome b subunit</fullName>
    </alternativeName>
</protein>
<reference key="1">
    <citation type="submission" date="1997-09" db="EMBL/GenBank/DDBJ databases">
        <authorList>
            <person name="Su B."/>
            <person name="Wang Y.X."/>
            <person name="Lan H."/>
            <person name="Wang W."/>
            <person name="Zhang Y.P."/>
        </authorList>
    </citation>
    <scope>NUCLEOTIDE SEQUENCE [GENOMIC DNA]</scope>
</reference>
<sequence length="379" mass="42921">MTNIRKSHPLMKIVNNAFIDLPAPSNISSWWNFGSLLGICLIIQILTGLFLAMHYTSDTMTAFSSVTHICRDVNYGWIIRYMHANGASMFFICLFMHVGRGLYYGSYTFLETWNIGVILLFTVMATAFMGYVLPWGQMSFWGATVITNLLSAIPYIGTNLVEWIWGGFSVDKATLTRFFAFHFILPFIIAALAMVHLLFLHETGSNNPTGITSDMDKIPFHPYYTIKDILGVLLLILVLMTLVLFTPDLLGDPDNYTPANPLNTPPHIKPEWYFLFAYAILRSIPNKLGGVLALVLSILILIFMPLLHTSKQRSMMFRPLSQCLFWILVADLLTLTWIGGQPVEHPYIIIGQLASIMYFLLILVMMPVASMVENNLLKW</sequence>
<organism>
    <name type="scientific">Moschus chrysogaster</name>
    <name type="common">Alpine musk deer</name>
    <dbReference type="NCBI Taxonomy" id="68412"/>
    <lineage>
        <taxon>Eukaryota</taxon>
        <taxon>Metazoa</taxon>
        <taxon>Chordata</taxon>
        <taxon>Craniata</taxon>
        <taxon>Vertebrata</taxon>
        <taxon>Euteleostomi</taxon>
        <taxon>Mammalia</taxon>
        <taxon>Eutheria</taxon>
        <taxon>Laurasiatheria</taxon>
        <taxon>Artiodactyla</taxon>
        <taxon>Ruminantia</taxon>
        <taxon>Pecora</taxon>
        <taxon>Moschidae</taxon>
        <taxon>Moschus</taxon>
    </lineage>
</organism>
<accession>Q7J6I1</accession>
<evidence type="ECO:0000250" key="1"/>
<evidence type="ECO:0000250" key="2">
    <source>
        <dbReference type="UniProtKB" id="P00157"/>
    </source>
</evidence>
<evidence type="ECO:0000255" key="3">
    <source>
        <dbReference type="PROSITE-ProRule" id="PRU00967"/>
    </source>
</evidence>
<evidence type="ECO:0000255" key="4">
    <source>
        <dbReference type="PROSITE-ProRule" id="PRU00968"/>
    </source>
</evidence>
<proteinExistence type="inferred from homology"/>
<name>CYB_MOSCH</name>